<gene>
    <name evidence="1" type="primary">atpD</name>
    <name type="ordered locus">Psyc_2024</name>
</gene>
<organism>
    <name type="scientific">Psychrobacter arcticus (strain DSM 17307 / VKM B-2377 / 273-4)</name>
    <dbReference type="NCBI Taxonomy" id="259536"/>
    <lineage>
        <taxon>Bacteria</taxon>
        <taxon>Pseudomonadati</taxon>
        <taxon>Pseudomonadota</taxon>
        <taxon>Gammaproteobacteria</taxon>
        <taxon>Moraxellales</taxon>
        <taxon>Moraxellaceae</taxon>
        <taxon>Psychrobacter</taxon>
    </lineage>
</organism>
<name>ATPB_PSYA2</name>
<accession>Q4FQ37</accession>
<proteinExistence type="inferred from homology"/>
<protein>
    <recommendedName>
        <fullName evidence="1">ATP synthase subunit beta</fullName>
        <ecNumber evidence="1">7.1.2.2</ecNumber>
    </recommendedName>
    <alternativeName>
        <fullName evidence="1">ATP synthase F1 sector subunit beta</fullName>
    </alternativeName>
    <alternativeName>
        <fullName evidence="1">F-ATPase subunit beta</fullName>
    </alternativeName>
</protein>
<comment type="function">
    <text evidence="1">Produces ATP from ADP in the presence of a proton gradient across the membrane. The catalytic sites are hosted primarily by the beta subunits.</text>
</comment>
<comment type="catalytic activity">
    <reaction evidence="1">
        <text>ATP + H2O + 4 H(+)(in) = ADP + phosphate + 5 H(+)(out)</text>
        <dbReference type="Rhea" id="RHEA:57720"/>
        <dbReference type="ChEBI" id="CHEBI:15377"/>
        <dbReference type="ChEBI" id="CHEBI:15378"/>
        <dbReference type="ChEBI" id="CHEBI:30616"/>
        <dbReference type="ChEBI" id="CHEBI:43474"/>
        <dbReference type="ChEBI" id="CHEBI:456216"/>
        <dbReference type="EC" id="7.1.2.2"/>
    </reaction>
</comment>
<comment type="subunit">
    <text evidence="1">F-type ATPases have 2 components, CF(1) - the catalytic core - and CF(0) - the membrane proton channel. CF(1) has five subunits: alpha(3), beta(3), gamma(1), delta(1), epsilon(1). CF(0) has three main subunits: a(1), b(2) and c(9-12). The alpha and beta chains form an alternating ring which encloses part of the gamma chain. CF(1) is attached to CF(0) by a central stalk formed by the gamma and epsilon chains, while a peripheral stalk is formed by the delta and b chains.</text>
</comment>
<comment type="subcellular location">
    <subcellularLocation>
        <location evidence="1">Cell inner membrane</location>
        <topology evidence="1">Peripheral membrane protein</topology>
    </subcellularLocation>
</comment>
<comment type="similarity">
    <text evidence="1">Belongs to the ATPase alpha/beta chains family.</text>
</comment>
<feature type="chain" id="PRO_0000254345" description="ATP synthase subunit beta">
    <location>
        <begin position="1"/>
        <end position="477"/>
    </location>
</feature>
<feature type="binding site" evidence="1">
    <location>
        <begin position="148"/>
        <end position="155"/>
    </location>
    <ligand>
        <name>ATP</name>
        <dbReference type="ChEBI" id="CHEBI:30616"/>
    </ligand>
</feature>
<dbReference type="EC" id="7.1.2.2" evidence="1"/>
<dbReference type="EMBL" id="CP000082">
    <property type="protein sequence ID" value="AAZ19871.1"/>
    <property type="molecule type" value="Genomic_DNA"/>
</dbReference>
<dbReference type="RefSeq" id="WP_011281279.1">
    <property type="nucleotide sequence ID" value="NC_007204.1"/>
</dbReference>
<dbReference type="SMR" id="Q4FQ37"/>
<dbReference type="STRING" id="259536.Psyc_2024"/>
<dbReference type="KEGG" id="par:Psyc_2024"/>
<dbReference type="eggNOG" id="COG0055">
    <property type="taxonomic scope" value="Bacteria"/>
</dbReference>
<dbReference type="HOGENOM" id="CLU_022398_0_2_6"/>
<dbReference type="OrthoDB" id="9801639at2"/>
<dbReference type="Proteomes" id="UP000000546">
    <property type="component" value="Chromosome"/>
</dbReference>
<dbReference type="GO" id="GO:0005886">
    <property type="term" value="C:plasma membrane"/>
    <property type="evidence" value="ECO:0007669"/>
    <property type="project" value="UniProtKB-SubCell"/>
</dbReference>
<dbReference type="GO" id="GO:0045259">
    <property type="term" value="C:proton-transporting ATP synthase complex"/>
    <property type="evidence" value="ECO:0007669"/>
    <property type="project" value="UniProtKB-KW"/>
</dbReference>
<dbReference type="GO" id="GO:0005524">
    <property type="term" value="F:ATP binding"/>
    <property type="evidence" value="ECO:0007669"/>
    <property type="project" value="UniProtKB-UniRule"/>
</dbReference>
<dbReference type="GO" id="GO:0016887">
    <property type="term" value="F:ATP hydrolysis activity"/>
    <property type="evidence" value="ECO:0007669"/>
    <property type="project" value="InterPro"/>
</dbReference>
<dbReference type="GO" id="GO:0046933">
    <property type="term" value="F:proton-transporting ATP synthase activity, rotational mechanism"/>
    <property type="evidence" value="ECO:0007669"/>
    <property type="project" value="UniProtKB-UniRule"/>
</dbReference>
<dbReference type="CDD" id="cd18110">
    <property type="entry name" value="ATP-synt_F1_beta_C"/>
    <property type="match status" value="1"/>
</dbReference>
<dbReference type="CDD" id="cd18115">
    <property type="entry name" value="ATP-synt_F1_beta_N"/>
    <property type="match status" value="1"/>
</dbReference>
<dbReference type="CDD" id="cd01133">
    <property type="entry name" value="F1-ATPase_beta_CD"/>
    <property type="match status" value="1"/>
</dbReference>
<dbReference type="FunFam" id="1.10.1140.10:FF:000001">
    <property type="entry name" value="ATP synthase subunit beta"/>
    <property type="match status" value="1"/>
</dbReference>
<dbReference type="FunFam" id="3.40.50.300:FF:000004">
    <property type="entry name" value="ATP synthase subunit beta"/>
    <property type="match status" value="1"/>
</dbReference>
<dbReference type="Gene3D" id="2.40.10.170">
    <property type="match status" value="1"/>
</dbReference>
<dbReference type="Gene3D" id="1.10.1140.10">
    <property type="entry name" value="Bovine Mitochondrial F1-atpase, Atp Synthase Beta Chain, Chain D, domain 3"/>
    <property type="match status" value="1"/>
</dbReference>
<dbReference type="Gene3D" id="3.40.50.300">
    <property type="entry name" value="P-loop containing nucleotide triphosphate hydrolases"/>
    <property type="match status" value="1"/>
</dbReference>
<dbReference type="HAMAP" id="MF_01347">
    <property type="entry name" value="ATP_synth_beta_bact"/>
    <property type="match status" value="1"/>
</dbReference>
<dbReference type="InterPro" id="IPR003593">
    <property type="entry name" value="AAA+_ATPase"/>
</dbReference>
<dbReference type="InterPro" id="IPR055190">
    <property type="entry name" value="ATP-synt_VA_C"/>
</dbReference>
<dbReference type="InterPro" id="IPR005722">
    <property type="entry name" value="ATP_synth_F1_bsu"/>
</dbReference>
<dbReference type="InterPro" id="IPR020003">
    <property type="entry name" value="ATPase_a/bsu_AS"/>
</dbReference>
<dbReference type="InterPro" id="IPR050053">
    <property type="entry name" value="ATPase_alpha/beta_chains"/>
</dbReference>
<dbReference type="InterPro" id="IPR004100">
    <property type="entry name" value="ATPase_F1/V1/A1_a/bsu_N"/>
</dbReference>
<dbReference type="InterPro" id="IPR036121">
    <property type="entry name" value="ATPase_F1/V1/A1_a/bsu_N_sf"/>
</dbReference>
<dbReference type="InterPro" id="IPR000194">
    <property type="entry name" value="ATPase_F1/V1/A1_a/bsu_nucl-bd"/>
</dbReference>
<dbReference type="InterPro" id="IPR024034">
    <property type="entry name" value="ATPase_F1/V1_b/a_C"/>
</dbReference>
<dbReference type="InterPro" id="IPR027417">
    <property type="entry name" value="P-loop_NTPase"/>
</dbReference>
<dbReference type="NCBIfam" id="TIGR01039">
    <property type="entry name" value="atpD"/>
    <property type="match status" value="1"/>
</dbReference>
<dbReference type="PANTHER" id="PTHR15184">
    <property type="entry name" value="ATP SYNTHASE"/>
    <property type="match status" value="1"/>
</dbReference>
<dbReference type="PANTHER" id="PTHR15184:SF71">
    <property type="entry name" value="ATP SYNTHASE SUBUNIT BETA, MITOCHONDRIAL"/>
    <property type="match status" value="1"/>
</dbReference>
<dbReference type="Pfam" id="PF00006">
    <property type="entry name" value="ATP-synt_ab"/>
    <property type="match status" value="1"/>
</dbReference>
<dbReference type="Pfam" id="PF02874">
    <property type="entry name" value="ATP-synt_ab_N"/>
    <property type="match status" value="1"/>
</dbReference>
<dbReference type="Pfam" id="PF22919">
    <property type="entry name" value="ATP-synt_VA_C"/>
    <property type="match status" value="1"/>
</dbReference>
<dbReference type="SMART" id="SM00382">
    <property type="entry name" value="AAA"/>
    <property type="match status" value="1"/>
</dbReference>
<dbReference type="SUPFAM" id="SSF47917">
    <property type="entry name" value="C-terminal domain of alpha and beta subunits of F1 ATP synthase"/>
    <property type="match status" value="1"/>
</dbReference>
<dbReference type="SUPFAM" id="SSF50615">
    <property type="entry name" value="N-terminal domain of alpha and beta subunits of F1 ATP synthase"/>
    <property type="match status" value="1"/>
</dbReference>
<dbReference type="SUPFAM" id="SSF52540">
    <property type="entry name" value="P-loop containing nucleoside triphosphate hydrolases"/>
    <property type="match status" value="1"/>
</dbReference>
<dbReference type="PROSITE" id="PS00152">
    <property type="entry name" value="ATPASE_ALPHA_BETA"/>
    <property type="match status" value="1"/>
</dbReference>
<evidence type="ECO:0000255" key="1">
    <source>
        <dbReference type="HAMAP-Rule" id="MF_01347"/>
    </source>
</evidence>
<keyword id="KW-0066">ATP synthesis</keyword>
<keyword id="KW-0067">ATP-binding</keyword>
<keyword id="KW-0997">Cell inner membrane</keyword>
<keyword id="KW-1003">Cell membrane</keyword>
<keyword id="KW-0139">CF(1)</keyword>
<keyword id="KW-0375">Hydrogen ion transport</keyword>
<keyword id="KW-0406">Ion transport</keyword>
<keyword id="KW-0472">Membrane</keyword>
<keyword id="KW-0547">Nucleotide-binding</keyword>
<keyword id="KW-1185">Reference proteome</keyword>
<keyword id="KW-1278">Translocase</keyword>
<keyword id="KW-0813">Transport</keyword>
<reference key="1">
    <citation type="journal article" date="2010" name="Appl. Environ. Microbiol.">
        <title>The genome sequence of Psychrobacter arcticus 273-4, a psychroactive Siberian permafrost bacterium, reveals mechanisms for adaptation to low-temperature growth.</title>
        <authorList>
            <person name="Ayala-del-Rio H.L."/>
            <person name="Chain P.S."/>
            <person name="Grzymski J.J."/>
            <person name="Ponder M.A."/>
            <person name="Ivanova N."/>
            <person name="Bergholz P.W."/>
            <person name="Di Bartolo G."/>
            <person name="Hauser L."/>
            <person name="Land M."/>
            <person name="Bakermans C."/>
            <person name="Rodrigues D."/>
            <person name="Klappenbach J."/>
            <person name="Zarka D."/>
            <person name="Larimer F."/>
            <person name="Richardson P."/>
            <person name="Murray A."/>
            <person name="Thomashow M."/>
            <person name="Tiedje J.M."/>
        </authorList>
    </citation>
    <scope>NUCLEOTIDE SEQUENCE [LARGE SCALE GENOMIC DNA]</scope>
    <source>
        <strain>DSM 17307 / VKM B-2377 / 273-4</strain>
    </source>
</reference>
<sequence length="477" mass="51731">MSSGRIVQIIGAVLDVEFNRNEVPRIYDALQVDGTETTLEVQQQLGDGIVRTIAMGSTEGLKRNLSVTNTGGPISVPVGVGTLGRIMDVLGRPIDEEGPVEADERWSIHREAPSYAEQSNSTELLETGIKVIDLLCPFAKGGKVGLFGGAGVGKTVNMMELINNIALKHEGLSVFAGVGERTREGNDFYHEMQEAGVVNTEDFSKSKVAMVYGQMNEPPGNRLRVALSGLTMAEYFRDTKDPATGKGRDVLLFVDNIYRYTLAGTEVSALLGRMPSAVGYQPTLAEEMGMLQERITSTQSGSITSVQAVYVPADDLTDPSPATTFAHLDATVVLSRDIASQGIYPAVDPLDSTSRQLDPLVIGEEHYNVARGVQEVLQRYKELKDIIAILGMDELSEEDKLVVYRARKIQRFLSQPFHVAEVFTGAPGKYVPLRDTIASFKAIIAGEYDSLPEQAFYMAGGIDEVVAKAEKMKSSAA</sequence>